<comment type="function">
    <text evidence="1">Catalyzes the interconversion of 2-phosphoglycerate and 3-phosphoglycerate.</text>
</comment>
<comment type="catalytic activity">
    <reaction evidence="1">
        <text>(2R)-2-phosphoglycerate = (2R)-3-phosphoglycerate</text>
        <dbReference type="Rhea" id="RHEA:15901"/>
        <dbReference type="ChEBI" id="CHEBI:58272"/>
        <dbReference type="ChEBI" id="CHEBI:58289"/>
        <dbReference type="EC" id="5.4.2.11"/>
    </reaction>
</comment>
<comment type="pathway">
    <text evidence="1">Carbohydrate degradation; glycolysis; pyruvate from D-glyceraldehyde 3-phosphate: step 3/5.</text>
</comment>
<comment type="subunit">
    <text evidence="1">Homodimer.</text>
</comment>
<comment type="similarity">
    <text evidence="1">Belongs to the phosphoglycerate mutase family. BPG-dependent PGAM subfamily.</text>
</comment>
<accession>Q2NUK6</accession>
<sequence>MAVTKLVLIRHGESQWNNENRFTGWTDVDLSDKGLTEAKQAGQVLKADGYVFDFAYTSVLKRAIHTLWGVLDELDQAWLPVEKSWRLNERHYGALQGLNKAETAEKYGDEQVKQWRRGFAITPPELTREDERFPGHDPRYANLSAAELPTTESLALTIDRVIPYWNETILPRMKSGERIIIAAHGNSIRAMVKFLDNLSEEEILELNIPTGVPLVYEFDDNMKPIKHYYLGNADEIAAKAAAVANQGKAK</sequence>
<organism>
    <name type="scientific">Sodalis glossinidius (strain morsitans)</name>
    <dbReference type="NCBI Taxonomy" id="343509"/>
    <lineage>
        <taxon>Bacteria</taxon>
        <taxon>Pseudomonadati</taxon>
        <taxon>Pseudomonadota</taxon>
        <taxon>Gammaproteobacteria</taxon>
        <taxon>Enterobacterales</taxon>
        <taxon>Bruguierivoracaceae</taxon>
        <taxon>Sodalis</taxon>
    </lineage>
</organism>
<feature type="chain" id="PRO_1000064097" description="2,3-bisphosphoglycerate-dependent phosphoglycerate mutase">
    <location>
        <begin position="1"/>
        <end position="250"/>
    </location>
</feature>
<feature type="active site" description="Tele-phosphohistidine intermediate" evidence="1">
    <location>
        <position position="11"/>
    </location>
</feature>
<feature type="active site" description="Proton donor/acceptor" evidence="1">
    <location>
        <position position="89"/>
    </location>
</feature>
<feature type="binding site" evidence="1">
    <location>
        <begin position="10"/>
        <end position="17"/>
    </location>
    <ligand>
        <name>substrate</name>
    </ligand>
</feature>
<feature type="binding site" evidence="1">
    <location>
        <begin position="23"/>
        <end position="24"/>
    </location>
    <ligand>
        <name>substrate</name>
    </ligand>
</feature>
<feature type="binding site" evidence="1">
    <location>
        <position position="62"/>
    </location>
    <ligand>
        <name>substrate</name>
    </ligand>
</feature>
<feature type="binding site" evidence="1">
    <location>
        <begin position="89"/>
        <end position="92"/>
    </location>
    <ligand>
        <name>substrate</name>
    </ligand>
</feature>
<feature type="binding site" evidence="1">
    <location>
        <position position="100"/>
    </location>
    <ligand>
        <name>substrate</name>
    </ligand>
</feature>
<feature type="binding site" evidence="1">
    <location>
        <begin position="116"/>
        <end position="117"/>
    </location>
    <ligand>
        <name>substrate</name>
    </ligand>
</feature>
<feature type="binding site" evidence="1">
    <location>
        <begin position="185"/>
        <end position="186"/>
    </location>
    <ligand>
        <name>substrate</name>
    </ligand>
</feature>
<feature type="site" description="Transition state stabilizer" evidence="1">
    <location>
        <position position="184"/>
    </location>
</feature>
<dbReference type="EC" id="5.4.2.11" evidence="1"/>
<dbReference type="EMBL" id="AP008232">
    <property type="protein sequence ID" value="BAE74169.1"/>
    <property type="molecule type" value="Genomic_DNA"/>
</dbReference>
<dbReference type="RefSeq" id="WP_011410731.1">
    <property type="nucleotide sequence ID" value="NC_007712.1"/>
</dbReference>
<dbReference type="SMR" id="Q2NUK6"/>
<dbReference type="STRING" id="343509.SG0894"/>
<dbReference type="KEGG" id="sgl:SG0894"/>
<dbReference type="eggNOG" id="COG0588">
    <property type="taxonomic scope" value="Bacteria"/>
</dbReference>
<dbReference type="HOGENOM" id="CLU_033323_1_1_6"/>
<dbReference type="OrthoDB" id="9781415at2"/>
<dbReference type="UniPathway" id="UPA00109">
    <property type="reaction ID" value="UER00186"/>
</dbReference>
<dbReference type="Proteomes" id="UP000001932">
    <property type="component" value="Chromosome"/>
</dbReference>
<dbReference type="GO" id="GO:0004619">
    <property type="term" value="F:phosphoglycerate mutase activity"/>
    <property type="evidence" value="ECO:0007669"/>
    <property type="project" value="UniProtKB-EC"/>
</dbReference>
<dbReference type="GO" id="GO:0006094">
    <property type="term" value="P:gluconeogenesis"/>
    <property type="evidence" value="ECO:0007669"/>
    <property type="project" value="UniProtKB-UniRule"/>
</dbReference>
<dbReference type="GO" id="GO:0006096">
    <property type="term" value="P:glycolytic process"/>
    <property type="evidence" value="ECO:0007669"/>
    <property type="project" value="UniProtKB-UniRule"/>
</dbReference>
<dbReference type="CDD" id="cd07067">
    <property type="entry name" value="HP_PGM_like"/>
    <property type="match status" value="1"/>
</dbReference>
<dbReference type="FunFam" id="3.40.50.1240:FF:000003">
    <property type="entry name" value="2,3-bisphosphoglycerate-dependent phosphoglycerate mutase"/>
    <property type="match status" value="1"/>
</dbReference>
<dbReference type="Gene3D" id="3.40.50.1240">
    <property type="entry name" value="Phosphoglycerate mutase-like"/>
    <property type="match status" value="1"/>
</dbReference>
<dbReference type="HAMAP" id="MF_01039">
    <property type="entry name" value="PGAM_GpmA"/>
    <property type="match status" value="1"/>
</dbReference>
<dbReference type="InterPro" id="IPR013078">
    <property type="entry name" value="His_Pase_superF_clade-1"/>
</dbReference>
<dbReference type="InterPro" id="IPR029033">
    <property type="entry name" value="His_PPase_superfam"/>
</dbReference>
<dbReference type="InterPro" id="IPR001345">
    <property type="entry name" value="PG/BPGM_mutase_AS"/>
</dbReference>
<dbReference type="InterPro" id="IPR005952">
    <property type="entry name" value="Phosphogly_mut1"/>
</dbReference>
<dbReference type="NCBIfam" id="TIGR01258">
    <property type="entry name" value="pgm_1"/>
    <property type="match status" value="1"/>
</dbReference>
<dbReference type="NCBIfam" id="NF010713">
    <property type="entry name" value="PRK14115.1"/>
    <property type="match status" value="1"/>
</dbReference>
<dbReference type="PANTHER" id="PTHR11931">
    <property type="entry name" value="PHOSPHOGLYCERATE MUTASE"/>
    <property type="match status" value="1"/>
</dbReference>
<dbReference type="Pfam" id="PF00300">
    <property type="entry name" value="His_Phos_1"/>
    <property type="match status" value="1"/>
</dbReference>
<dbReference type="PIRSF" id="PIRSF000709">
    <property type="entry name" value="6PFK_2-Ptase"/>
    <property type="match status" value="1"/>
</dbReference>
<dbReference type="SMART" id="SM00855">
    <property type="entry name" value="PGAM"/>
    <property type="match status" value="1"/>
</dbReference>
<dbReference type="SUPFAM" id="SSF53254">
    <property type="entry name" value="Phosphoglycerate mutase-like"/>
    <property type="match status" value="1"/>
</dbReference>
<dbReference type="PROSITE" id="PS00175">
    <property type="entry name" value="PG_MUTASE"/>
    <property type="match status" value="1"/>
</dbReference>
<keyword id="KW-0312">Gluconeogenesis</keyword>
<keyword id="KW-0324">Glycolysis</keyword>
<keyword id="KW-0413">Isomerase</keyword>
<proteinExistence type="inferred from homology"/>
<reference key="1">
    <citation type="journal article" date="2006" name="Genome Res.">
        <title>Massive genome erosion and functional adaptations provide insights into the symbiotic lifestyle of Sodalis glossinidius in the tsetse host.</title>
        <authorList>
            <person name="Toh H."/>
            <person name="Weiss B.L."/>
            <person name="Perkin S.A.H."/>
            <person name="Yamashita A."/>
            <person name="Oshima K."/>
            <person name="Hattori M."/>
            <person name="Aksoy S."/>
        </authorList>
    </citation>
    <scope>NUCLEOTIDE SEQUENCE [LARGE SCALE GENOMIC DNA]</scope>
    <source>
        <strain>morsitans</strain>
    </source>
</reference>
<evidence type="ECO:0000255" key="1">
    <source>
        <dbReference type="HAMAP-Rule" id="MF_01039"/>
    </source>
</evidence>
<protein>
    <recommendedName>
        <fullName evidence="1">2,3-bisphosphoglycerate-dependent phosphoglycerate mutase</fullName>
        <shortName evidence="1">BPG-dependent PGAM</shortName>
        <shortName evidence="1">PGAM</shortName>
        <shortName evidence="1">Phosphoglyceromutase</shortName>
        <shortName evidence="1">dPGM</shortName>
        <ecNumber evidence="1">5.4.2.11</ecNumber>
    </recommendedName>
</protein>
<gene>
    <name evidence="1" type="primary">gpmA</name>
    <name type="ordered locus">SG0894</name>
</gene>
<name>GPMA_SODGM</name>